<name>DPCKG_CALMQ</name>
<feature type="chain" id="PRO_0000380043" description="GTP-dependent dephospho-CoA kinase">
    <location>
        <begin position="1"/>
        <end position="200"/>
    </location>
</feature>
<feature type="binding site" evidence="1">
    <location>
        <position position="56"/>
    </location>
    <ligand>
        <name>GTP</name>
        <dbReference type="ChEBI" id="CHEBI:37565"/>
    </ligand>
</feature>
<feature type="binding site" evidence="1">
    <location>
        <position position="57"/>
    </location>
    <ligand>
        <name>GTP</name>
        <dbReference type="ChEBI" id="CHEBI:37565"/>
    </ligand>
</feature>
<feature type="binding site" evidence="1">
    <location>
        <position position="58"/>
    </location>
    <ligand>
        <name>GTP</name>
        <dbReference type="ChEBI" id="CHEBI:37565"/>
    </ligand>
</feature>
<feature type="binding site" evidence="1">
    <location>
        <position position="75"/>
    </location>
    <ligand>
        <name>GTP</name>
        <dbReference type="ChEBI" id="CHEBI:37565"/>
    </ligand>
</feature>
<feature type="binding site" evidence="1">
    <location>
        <position position="132"/>
    </location>
    <ligand>
        <name>GTP</name>
        <dbReference type="ChEBI" id="CHEBI:37565"/>
    </ligand>
</feature>
<proteinExistence type="inferred from homology"/>
<keyword id="KW-0173">Coenzyme A biosynthesis</keyword>
<keyword id="KW-0342">GTP-binding</keyword>
<keyword id="KW-0418">Kinase</keyword>
<keyword id="KW-0547">Nucleotide-binding</keyword>
<keyword id="KW-1185">Reference proteome</keyword>
<keyword id="KW-0808">Transferase</keyword>
<dbReference type="EC" id="2.7.1.237" evidence="1"/>
<dbReference type="EMBL" id="CP000852">
    <property type="protein sequence ID" value="ABW02779.1"/>
    <property type="molecule type" value="Genomic_DNA"/>
</dbReference>
<dbReference type="RefSeq" id="WP_012186998.1">
    <property type="nucleotide sequence ID" value="NC_009954.1"/>
</dbReference>
<dbReference type="SMR" id="A8MBP6"/>
<dbReference type="STRING" id="397948.Cmaq_1963"/>
<dbReference type="GeneID" id="5708460"/>
<dbReference type="KEGG" id="cma:Cmaq_1963"/>
<dbReference type="eggNOG" id="arCOG04076">
    <property type="taxonomic scope" value="Archaea"/>
</dbReference>
<dbReference type="HOGENOM" id="CLU_120795_1_0_2"/>
<dbReference type="OrthoDB" id="15447at2157"/>
<dbReference type="UniPathway" id="UPA00241"/>
<dbReference type="Proteomes" id="UP000001137">
    <property type="component" value="Chromosome"/>
</dbReference>
<dbReference type="GO" id="GO:0005525">
    <property type="term" value="F:GTP binding"/>
    <property type="evidence" value="ECO:0007669"/>
    <property type="project" value="UniProtKB-UniRule"/>
</dbReference>
<dbReference type="GO" id="GO:0016301">
    <property type="term" value="F:kinase activity"/>
    <property type="evidence" value="ECO:0007669"/>
    <property type="project" value="UniProtKB-UniRule"/>
</dbReference>
<dbReference type="GO" id="GO:0015937">
    <property type="term" value="P:coenzyme A biosynthetic process"/>
    <property type="evidence" value="ECO:0007669"/>
    <property type="project" value="UniProtKB-UniRule"/>
</dbReference>
<dbReference type="HAMAP" id="MF_00590">
    <property type="entry name" value="Dephospho_CoA_kinase_GTP_dep"/>
    <property type="match status" value="1"/>
</dbReference>
<dbReference type="InterPro" id="IPR007164">
    <property type="entry name" value="GTP-dep_dephospho-CoA_kin"/>
</dbReference>
<dbReference type="PANTHER" id="PTHR40732:SF1">
    <property type="entry name" value="GTP-DEPENDENT DEPHOSPHO-COA KINASE"/>
    <property type="match status" value="1"/>
</dbReference>
<dbReference type="PANTHER" id="PTHR40732">
    <property type="entry name" value="UPF0218 PROTEIN TK1697"/>
    <property type="match status" value="1"/>
</dbReference>
<dbReference type="Pfam" id="PF04019">
    <property type="entry name" value="DUF359"/>
    <property type="match status" value="1"/>
</dbReference>
<organism>
    <name type="scientific">Caldivirga maquilingensis (strain ATCC 700844 / DSM 13496 / JCM 10307 / IC-167)</name>
    <dbReference type="NCBI Taxonomy" id="397948"/>
    <lineage>
        <taxon>Archaea</taxon>
        <taxon>Thermoproteota</taxon>
        <taxon>Thermoprotei</taxon>
        <taxon>Thermoproteales</taxon>
        <taxon>Thermoproteaceae</taxon>
        <taxon>Caldivirga</taxon>
    </lineage>
</organism>
<sequence>MSETNHPRLILRSKRARALMALPFAISIPRDPPDSIMIARELFNDFKLSIIATVGDVVSLNVATYWRRPDLRVIDLNTRRGTVIQHSDMDGVVYRVRNERSTLSYESFNIMRSAYANVLSGNRVTIIVDGEEDLLAIPAVLEAPGNTGILYGLYTGYLVLIPAVNEYKILMLKLLTLLDRDECETLRNCNSVNNYGWKNS</sequence>
<reference key="1">
    <citation type="submission" date="2007-10" db="EMBL/GenBank/DDBJ databases">
        <title>Complete sequence of Caldivirga maquilingensis IC-167.</title>
        <authorList>
            <consortium name="US DOE Joint Genome Institute"/>
            <person name="Copeland A."/>
            <person name="Lucas S."/>
            <person name="Lapidus A."/>
            <person name="Barry K."/>
            <person name="Glavina del Rio T."/>
            <person name="Dalin E."/>
            <person name="Tice H."/>
            <person name="Pitluck S."/>
            <person name="Saunders E."/>
            <person name="Brettin T."/>
            <person name="Bruce D."/>
            <person name="Detter J.C."/>
            <person name="Han C."/>
            <person name="Schmutz J."/>
            <person name="Larimer F."/>
            <person name="Land M."/>
            <person name="Hauser L."/>
            <person name="Kyrpides N."/>
            <person name="Ivanova N."/>
            <person name="Biddle J.F."/>
            <person name="Zhang Z."/>
            <person name="Fitz-Gibbon S.T."/>
            <person name="Lowe T.M."/>
            <person name="Saltikov C."/>
            <person name="House C.H."/>
            <person name="Richardson P."/>
        </authorList>
    </citation>
    <scope>NUCLEOTIDE SEQUENCE [LARGE SCALE GENOMIC DNA]</scope>
    <source>
        <strain>ATCC 700844 / DSM 13496 / JCM 10307 / IC-167</strain>
    </source>
</reference>
<evidence type="ECO:0000255" key="1">
    <source>
        <dbReference type="HAMAP-Rule" id="MF_00590"/>
    </source>
</evidence>
<comment type="function">
    <text evidence="1">Catalyzes the GTP-dependent phosphorylation of the 3'-hydroxyl group of dephosphocoenzyme A to form coenzyme A (CoA).</text>
</comment>
<comment type="catalytic activity">
    <reaction evidence="1">
        <text>3'-dephospho-CoA + GTP = GDP + CoA + H(+)</text>
        <dbReference type="Rhea" id="RHEA:61156"/>
        <dbReference type="ChEBI" id="CHEBI:15378"/>
        <dbReference type="ChEBI" id="CHEBI:37565"/>
        <dbReference type="ChEBI" id="CHEBI:57287"/>
        <dbReference type="ChEBI" id="CHEBI:57328"/>
        <dbReference type="ChEBI" id="CHEBI:58189"/>
        <dbReference type="EC" id="2.7.1.237"/>
    </reaction>
</comment>
<comment type="pathway">
    <text evidence="1">Cofactor biosynthesis; coenzyme A biosynthesis.</text>
</comment>
<comment type="similarity">
    <text evidence="1">Belongs to the GTP-dependent DPCK family.</text>
</comment>
<protein>
    <recommendedName>
        <fullName evidence="1">GTP-dependent dephospho-CoA kinase</fullName>
        <ecNumber evidence="1">2.7.1.237</ecNumber>
    </recommendedName>
    <alternativeName>
        <fullName evidence="1">Dephospho-coenzyme A kinase</fullName>
        <shortName evidence="1">DPCK</shortName>
    </alternativeName>
</protein>
<gene>
    <name type="ordered locus">Cmaq_1963</name>
</gene>
<accession>A8MBP6</accession>